<evidence type="ECO:0000250" key="1"/>
<evidence type="ECO:0000255" key="2"/>
<evidence type="ECO:0000305" key="3"/>
<gene>
    <name type="primary">NB</name>
</gene>
<protein>
    <recommendedName>
        <fullName>Glycoprotein NB</fullName>
    </recommendedName>
</protein>
<feature type="chain" id="PRO_0000078912" description="Glycoprotein NB">
    <location>
        <begin position="1"/>
        <end position="100"/>
    </location>
</feature>
<feature type="topological domain" description="Virion surface" evidence="2">
    <location>
        <begin position="1"/>
        <end position="18"/>
    </location>
</feature>
<feature type="transmembrane region" description="Helical; Signal-anchor for type III membrane protein" evidence="2">
    <location>
        <begin position="19"/>
        <end position="40"/>
    </location>
</feature>
<feature type="topological domain" description="Intravirion" evidence="2">
    <location>
        <begin position="41"/>
        <end position="100"/>
    </location>
</feature>
<feature type="glycosylation site" description="N-linked (GlcNAc...) asparagine; by host" evidence="2">
    <location>
        <position position="3"/>
    </location>
</feature>
<feature type="glycosylation site" description="N-linked (GlcNAc...) asparagine; by host" evidence="2">
    <location>
        <position position="7"/>
    </location>
</feature>
<organismHost>
    <name type="scientific">Homo sapiens</name>
    <name type="common">Human</name>
    <dbReference type="NCBI Taxonomy" id="9606"/>
</organismHost>
<reference key="1">
    <citation type="journal article" date="1990" name="Virology">
        <title>Antigenic, sequence, and crystal variation in influenza B neuraminidase.</title>
        <authorList>
            <person name="Air G.M."/>
            <person name="Laver W.G."/>
            <person name="Luo M."/>
            <person name="Stray S.J."/>
            <person name="Legrone G."/>
            <person name="Webster R.G."/>
        </authorList>
    </citation>
    <scope>NUCLEOTIDE SEQUENCE [GENOMIC RNA]</scope>
</reference>
<organism>
    <name type="scientific">Influenza B virus (strain B/Singapore/222/1979)</name>
    <dbReference type="NCBI Taxonomy" id="107417"/>
    <lineage>
        <taxon>Viruses</taxon>
        <taxon>Riboviria</taxon>
        <taxon>Orthornavirae</taxon>
        <taxon>Negarnaviricota</taxon>
        <taxon>Polyploviricotina</taxon>
        <taxon>Insthoviricetes</taxon>
        <taxon>Articulavirales</taxon>
        <taxon>Orthomyxoviridae</taxon>
        <taxon>Betainfluenzavirus</taxon>
        <taxon>Betainfluenzavirus influenzae</taxon>
        <taxon>Influenza B virus</taxon>
    </lineage>
</organism>
<keyword id="KW-0325">Glycoprotein</keyword>
<keyword id="KW-0375">Hydrogen ion transport</keyword>
<keyword id="KW-0407">Ion channel</keyword>
<keyword id="KW-0406">Ion transport</keyword>
<keyword id="KW-0472">Membrane</keyword>
<keyword id="KW-0735">Signal-anchor</keyword>
<keyword id="KW-0812">Transmembrane</keyword>
<keyword id="KW-1133">Transmembrane helix</keyword>
<keyword id="KW-0813">Transport</keyword>
<keyword id="KW-1182">Viral ion channel</keyword>
<keyword id="KW-0946">Virion</keyword>
<comment type="function">
    <text evidence="1">Putative viral proton channel. May play a role in virus entry (By similarity).</text>
</comment>
<comment type="subunit">
    <text evidence="1">Dimer.</text>
</comment>
<comment type="subcellular location">
    <subcellularLocation>
        <location evidence="3">Virion membrane</location>
        <topology evidence="3">Single-pass type III membrane protein</topology>
    </subcellularLocation>
</comment>
<comment type="similarity">
    <text evidence="3">Belongs to the influenza viruses type B glycoprotein NB family.</text>
</comment>
<sequence>MNNATFNYTNVNPISHIRGSVIITICVSFTVILTVFGYIAKIFTNKKNCTNNVIGLRERIKCSGCEPFCNKRDDISSPRTGVDIPSFILPGLNLSESTPN</sequence>
<dbReference type="EMBL" id="M30637">
    <property type="protein sequence ID" value="AAA43742.1"/>
    <property type="molecule type" value="Genomic_RNA"/>
</dbReference>
<dbReference type="PIR" id="G36825">
    <property type="entry name" value="G36825"/>
</dbReference>
<dbReference type="CAZy" id="GH34">
    <property type="family name" value="Glycoside Hydrolase Family 34"/>
</dbReference>
<dbReference type="TCDB" id="1.A.32.1.1">
    <property type="family name" value="the type b influenza virus nb channel (nb-c) family"/>
</dbReference>
<dbReference type="GlyCosmos" id="P16204">
    <property type="glycosylation" value="2 sites, No reported glycans"/>
</dbReference>
<dbReference type="Proteomes" id="UP000137758">
    <property type="component" value="Genome"/>
</dbReference>
<dbReference type="GO" id="GO:0033644">
    <property type="term" value="C:host cell membrane"/>
    <property type="evidence" value="ECO:0007669"/>
    <property type="project" value="UniProtKB-KW"/>
</dbReference>
<dbReference type="GO" id="GO:0016020">
    <property type="term" value="C:membrane"/>
    <property type="evidence" value="ECO:0007669"/>
    <property type="project" value="UniProtKB-KW"/>
</dbReference>
<dbReference type="GO" id="GO:0055036">
    <property type="term" value="C:virion membrane"/>
    <property type="evidence" value="ECO:0007669"/>
    <property type="project" value="UniProtKB-SubCell"/>
</dbReference>
<dbReference type="GO" id="GO:0015267">
    <property type="term" value="F:channel activity"/>
    <property type="evidence" value="ECO:0007669"/>
    <property type="project" value="UniProtKB-KW"/>
</dbReference>
<dbReference type="GO" id="GO:1902600">
    <property type="term" value="P:proton transmembrane transport"/>
    <property type="evidence" value="ECO:0007669"/>
    <property type="project" value="UniProtKB-KW"/>
</dbReference>
<dbReference type="InterPro" id="IPR007288">
    <property type="entry name" value="InfluenzaB_glycoprotein_NB"/>
</dbReference>
<dbReference type="Pfam" id="PF04159">
    <property type="entry name" value="NB"/>
    <property type="match status" value="1"/>
</dbReference>
<proteinExistence type="inferred from homology"/>
<accession>P16204</accession>
<name>VNB_INBSI</name>